<name>PO3F3_XENLA</name>
<gene>
    <name type="primary">pou3f3</name>
    <name type="synonym">nrl-20</name>
</gene>
<organism>
    <name type="scientific">Xenopus laevis</name>
    <name type="common">African clawed frog</name>
    <dbReference type="NCBI Taxonomy" id="8355"/>
    <lineage>
        <taxon>Eukaryota</taxon>
        <taxon>Metazoa</taxon>
        <taxon>Chordata</taxon>
        <taxon>Craniata</taxon>
        <taxon>Vertebrata</taxon>
        <taxon>Euteleostomi</taxon>
        <taxon>Amphibia</taxon>
        <taxon>Batrachia</taxon>
        <taxon>Anura</taxon>
        <taxon>Pipoidea</taxon>
        <taxon>Pipidae</taxon>
        <taxon>Xenopodinae</taxon>
        <taxon>Xenopus</taxon>
        <taxon>Xenopus</taxon>
    </lineage>
</organism>
<reference key="1">
    <citation type="journal article" date="1990" name="Nucleic Acids Res.">
        <title>Cloning and sequencing of POU-boxes expressed in Xenopus laevis neurula embryos.</title>
        <authorList>
            <person name="Baltzinger M."/>
            <person name="Stiegler P."/>
            <person name="Remy P."/>
        </authorList>
    </citation>
    <scope>NUCLEOTIDE SEQUENCE [MRNA]</scope>
    <source>
        <tissue>Neurula</tissue>
    </source>
</reference>
<dbReference type="EMBL" id="X54681">
    <property type="protein sequence ID" value="CAA38495.1"/>
    <property type="molecule type" value="mRNA"/>
</dbReference>
<dbReference type="PIR" id="S12181">
    <property type="entry name" value="S12181"/>
</dbReference>
<dbReference type="SMR" id="P20914"/>
<dbReference type="AGR" id="Xenbase:XB-GENE-920680"/>
<dbReference type="Xenbase" id="XB-GENE-920680">
    <property type="gene designation" value="pou3f3.S"/>
</dbReference>
<dbReference type="Proteomes" id="UP000186698">
    <property type="component" value="Unplaced"/>
</dbReference>
<dbReference type="GO" id="GO:0005634">
    <property type="term" value="C:nucleus"/>
    <property type="evidence" value="ECO:0007669"/>
    <property type="project" value="UniProtKB-SubCell"/>
</dbReference>
<dbReference type="GO" id="GO:0000981">
    <property type="term" value="F:DNA-binding transcription factor activity, RNA polymerase II-specific"/>
    <property type="evidence" value="ECO:0007669"/>
    <property type="project" value="TreeGrafter"/>
</dbReference>
<dbReference type="GO" id="GO:0000978">
    <property type="term" value="F:RNA polymerase II cis-regulatory region sequence-specific DNA binding"/>
    <property type="evidence" value="ECO:0007669"/>
    <property type="project" value="TreeGrafter"/>
</dbReference>
<dbReference type="CDD" id="cd00086">
    <property type="entry name" value="homeodomain"/>
    <property type="match status" value="1"/>
</dbReference>
<dbReference type="Gene3D" id="1.10.10.60">
    <property type="entry name" value="Homeodomain-like"/>
    <property type="match status" value="1"/>
</dbReference>
<dbReference type="Gene3D" id="1.10.260.40">
    <property type="entry name" value="lambda repressor-like DNA-binding domains"/>
    <property type="match status" value="1"/>
</dbReference>
<dbReference type="InterPro" id="IPR001356">
    <property type="entry name" value="HD"/>
</dbReference>
<dbReference type="InterPro" id="IPR009057">
    <property type="entry name" value="Homeodomain-like_sf"/>
</dbReference>
<dbReference type="InterPro" id="IPR010982">
    <property type="entry name" value="Lambda_DNA-bd_dom_sf"/>
</dbReference>
<dbReference type="InterPro" id="IPR013847">
    <property type="entry name" value="POU"/>
</dbReference>
<dbReference type="InterPro" id="IPR000327">
    <property type="entry name" value="POU_dom"/>
</dbReference>
<dbReference type="InterPro" id="IPR050255">
    <property type="entry name" value="POU_domain_TF"/>
</dbReference>
<dbReference type="PANTHER" id="PTHR11636">
    <property type="entry name" value="POU DOMAIN"/>
    <property type="match status" value="1"/>
</dbReference>
<dbReference type="PANTHER" id="PTHR11636:SF125">
    <property type="entry name" value="POU DOMAIN, CLASS 3, TRANSCRIPTION FACTOR 3"/>
    <property type="match status" value="1"/>
</dbReference>
<dbReference type="Pfam" id="PF00046">
    <property type="entry name" value="Homeodomain"/>
    <property type="match status" value="1"/>
</dbReference>
<dbReference type="Pfam" id="PF00157">
    <property type="entry name" value="Pou"/>
    <property type="match status" value="1"/>
</dbReference>
<dbReference type="PRINTS" id="PR00028">
    <property type="entry name" value="POUDOMAIN"/>
</dbReference>
<dbReference type="SMART" id="SM00352">
    <property type="entry name" value="POU"/>
    <property type="match status" value="1"/>
</dbReference>
<dbReference type="SUPFAM" id="SSF46689">
    <property type="entry name" value="Homeodomain-like"/>
    <property type="match status" value="1"/>
</dbReference>
<dbReference type="SUPFAM" id="SSF47413">
    <property type="entry name" value="lambda repressor-like DNA-binding domains"/>
    <property type="match status" value="1"/>
</dbReference>
<dbReference type="PROSITE" id="PS00465">
    <property type="entry name" value="POU_2"/>
    <property type="match status" value="1"/>
</dbReference>
<dbReference type="PROSITE" id="PS51179">
    <property type="entry name" value="POU_3"/>
    <property type="match status" value="1"/>
</dbReference>
<proteinExistence type="evidence at transcript level"/>
<keyword id="KW-0010">Activator</keyword>
<keyword id="KW-0238">DNA-binding</keyword>
<keyword id="KW-0371">Homeobox</keyword>
<keyword id="KW-0539">Nucleus</keyword>
<keyword id="KW-1185">Reference proteome</keyword>
<keyword id="KW-0804">Transcription</keyword>
<keyword id="KW-0805">Transcription regulation</keyword>
<sequence>QADVGLALGTLYGNVFSQTTICRFEALQLSFKNMCKLKPLLNKWLEEADSSTGSPTSIDKIAAQGRKRKKRTSIEVSVKGALESHFLKCPKPAAQEITTLADSLQ</sequence>
<feature type="chain" id="PRO_0000100768" description="POU domain, class 3, transcription factor 3">
    <location>
        <begin position="1" status="less than"/>
        <end position="105" status="greater than"/>
    </location>
</feature>
<feature type="domain" description="POU-specific" evidence="2">
    <location>
        <begin position="1" status="less than"/>
        <end position="49"/>
    </location>
</feature>
<feature type="DNA-binding region" description="Homeobox" evidence="1">
    <location>
        <begin position="67"/>
        <end position="105" status="greater than"/>
    </location>
</feature>
<feature type="non-terminal residue">
    <location>
        <position position="1"/>
    </location>
</feature>
<feature type="non-terminal residue">
    <location>
        <position position="105"/>
    </location>
</feature>
<accession>P20914</accession>
<evidence type="ECO:0000255" key="1">
    <source>
        <dbReference type="PROSITE-ProRule" id="PRU00108"/>
    </source>
</evidence>
<evidence type="ECO:0000255" key="2">
    <source>
        <dbReference type="PROSITE-ProRule" id="PRU00530"/>
    </source>
</evidence>
<evidence type="ECO:0000305" key="3"/>
<comment type="subcellular location">
    <subcellularLocation>
        <location>Nucleus</location>
    </subcellularLocation>
</comment>
<comment type="similarity">
    <text evidence="3">Belongs to the POU transcription factor family. Class-3 subfamily.</text>
</comment>
<protein>
    <recommendedName>
        <fullName>POU domain, class 3, transcription factor 3</fullName>
    </recommendedName>
    <alternativeName>
        <fullName>Homeotic protein NRL-20</fullName>
        <shortName>XlNRL-20</shortName>
    </alternativeName>
</protein>